<sequence>MASLLYLILFLLFVCISYYFTYYPTNKLQAAVMETDRENAIIRQRNDEIPTRTLDTAIFTDASTVASAQIHLYYNSNIGKIIMSLNGKKHTFNLYDDNDIRTLLPILLLSK</sequence>
<reference key="1">
    <citation type="journal article" date="1990" name="Virology">
        <title>The complete DNA sequence of vaccinia virus.</title>
        <authorList>
            <person name="Goebel S.J."/>
            <person name="Johnson G.P."/>
            <person name="Perkus M.E."/>
            <person name="Davis S.W."/>
            <person name="Winslow J.P."/>
            <person name="Paoletti E."/>
        </authorList>
    </citation>
    <scope>NUCLEOTIDE SEQUENCE [LARGE SCALE GENOMIC DNA]</scope>
</reference>
<reference key="2">
    <citation type="journal article" date="1990" name="Virology">
        <title>Appendix to 'The complete DNA sequence of vaccinia virus'.</title>
        <authorList>
            <person name="Goebel S.J."/>
            <person name="Johnson G.P."/>
            <person name="Perkus M.E."/>
            <person name="Davis S.W."/>
            <person name="Winslow J.P."/>
            <person name="Paoletti E."/>
        </authorList>
    </citation>
    <scope>NUCLEOTIDE SEQUENCE [LARGE SCALE GENOMIC DNA]</scope>
</reference>
<organism>
    <name type="scientific">Vaccinia virus (strain Copenhagen)</name>
    <name type="common">VACV</name>
    <dbReference type="NCBI Taxonomy" id="10249"/>
    <lineage>
        <taxon>Viruses</taxon>
        <taxon>Varidnaviria</taxon>
        <taxon>Bamfordvirae</taxon>
        <taxon>Nucleocytoviricota</taxon>
        <taxon>Pokkesviricetes</taxon>
        <taxon>Chitovirales</taxon>
        <taxon>Poxviridae</taxon>
        <taxon>Chordopoxvirinae</taxon>
        <taxon>Orthopoxvirus</taxon>
        <taxon>Vaccinia virus</taxon>
    </lineage>
</organism>
<name>PG086_VACCC</name>
<accession>P68459</accession>
<accession>P21024</accession>
<keyword id="KW-1169">Fusion of virus membrane with host cell membrane</keyword>
<keyword id="KW-1168">Fusion of virus membrane with host membrane</keyword>
<keyword id="KW-0426">Late protein</keyword>
<keyword id="KW-0472">Membrane</keyword>
<keyword id="KW-1185">Reference proteome</keyword>
<keyword id="KW-0735">Signal-anchor</keyword>
<keyword id="KW-0812">Transmembrane</keyword>
<keyword id="KW-1133">Transmembrane helix</keyword>
<keyword id="KW-0261">Viral envelope protein</keyword>
<keyword id="KW-1162">Viral penetration into host cytoplasm</keyword>
<keyword id="KW-0946">Virion</keyword>
<keyword id="KW-1160">Virus entry into host cell</keyword>
<feature type="chain" id="PRO_0000099527" description="Entry-fusion complex protein OPG086">
    <location>
        <begin position="1"/>
        <end position="111"/>
    </location>
</feature>
<feature type="transmembrane region" description="Helical; Signal-anchor" evidence="2">
    <location>
        <begin position="1"/>
        <end position="21"/>
    </location>
</feature>
<feature type="topological domain" description="Virion surface" evidence="2">
    <location>
        <begin position="22"/>
        <end position="111"/>
    </location>
</feature>
<protein>
    <recommendedName>
        <fullName>Entry-fusion complex protein OPG086</fullName>
        <shortName>EFC protein OPG086</shortName>
    </recommendedName>
    <alternativeName>
        <fullName>Protein G3</fullName>
    </alternativeName>
</protein>
<proteinExistence type="inferred from homology"/>
<evidence type="ECO:0000250" key="1">
    <source>
        <dbReference type="UniProtKB" id="P68458"/>
    </source>
</evidence>
<evidence type="ECO:0000255" key="2"/>
<evidence type="ECO:0000305" key="3"/>
<organismHost>
    <name type="scientific">Homo sapiens</name>
    <name type="common">Human</name>
    <dbReference type="NCBI Taxonomy" id="9606"/>
</organismHost>
<gene>
    <name type="primary">OPG086</name>
    <name type="ORF">G3L</name>
</gene>
<comment type="function">
    <text evidence="1">Component of the entry fusion complex (EFC), which consists of 11 proteins. During cell infection, this complex mediates entry of the virion core into the host cytoplasm by a two-step mechanism consisting of lipid mixing of the viral and cellular membranes and subsequent pore formation.</text>
</comment>
<comment type="subunit">
    <text evidence="1">Interacts with OPG099/L5. Component of the entry fusion complex (EFC) composed of OPG053, OPG076, OPG086, OPG094, OPG095, OPG099, OPG107, OPG143, OPG104, OPG147 and OPG155. Except for OPG095 and OPG053, each of the EFC proteins is required for assembly or stability of the complex.</text>
</comment>
<comment type="subcellular location">
    <subcellularLocation>
        <location evidence="1">Virion membrane</location>
        <topology evidence="1">Single-pass membrane protein</topology>
    </subcellularLocation>
    <text evidence="1">Component of the mature virion (MV) membrane.</text>
</comment>
<comment type="induction">
    <text evidence="1">Expressed in the late phase of the viral replicative cycle.</text>
</comment>
<comment type="PTM">
    <text evidence="1">Unglycosylated because produced in viral factories instead of the classic ER -Golgi route.</text>
</comment>
<comment type="similarity">
    <text evidence="3">Belongs to the orthopoxvirus OPG086 family.</text>
</comment>
<dbReference type="EMBL" id="M35027">
    <property type="protein sequence ID" value="AAA48066.1"/>
    <property type="molecule type" value="Genomic_DNA"/>
</dbReference>
<dbReference type="PIR" id="H42511">
    <property type="entry name" value="H42511"/>
</dbReference>
<dbReference type="SMR" id="P68459"/>
<dbReference type="Proteomes" id="UP000008269">
    <property type="component" value="Segment"/>
</dbReference>
<dbReference type="GO" id="GO:0016020">
    <property type="term" value="C:membrane"/>
    <property type="evidence" value="ECO:0007669"/>
    <property type="project" value="UniProtKB-KW"/>
</dbReference>
<dbReference type="GO" id="GO:0019031">
    <property type="term" value="C:viral envelope"/>
    <property type="evidence" value="ECO:0007669"/>
    <property type="project" value="UniProtKB-KW"/>
</dbReference>
<dbReference type="GO" id="GO:0055036">
    <property type="term" value="C:virion membrane"/>
    <property type="evidence" value="ECO:0007669"/>
    <property type="project" value="UniProtKB-SubCell"/>
</dbReference>
<dbReference type="GO" id="GO:0019064">
    <property type="term" value="P:fusion of virus membrane with host plasma membrane"/>
    <property type="evidence" value="ECO:0007669"/>
    <property type="project" value="UniProtKB-KW"/>
</dbReference>
<dbReference type="GO" id="GO:0046718">
    <property type="term" value="P:symbiont entry into host cell"/>
    <property type="evidence" value="ECO:0007669"/>
    <property type="project" value="UniProtKB-KW"/>
</dbReference>
<dbReference type="InterPro" id="IPR010367">
    <property type="entry name" value="Poxvirus_G3"/>
</dbReference>
<dbReference type="Pfam" id="PF06129">
    <property type="entry name" value="Chordopox_G3"/>
    <property type="match status" value="1"/>
</dbReference>